<organism>
    <name type="scientific">Herminiimonas arsenicoxydans</name>
    <dbReference type="NCBI Taxonomy" id="204773"/>
    <lineage>
        <taxon>Bacteria</taxon>
        <taxon>Pseudomonadati</taxon>
        <taxon>Pseudomonadota</taxon>
        <taxon>Betaproteobacteria</taxon>
        <taxon>Burkholderiales</taxon>
        <taxon>Oxalobacteraceae</taxon>
        <taxon>Herminiimonas</taxon>
    </lineage>
</organism>
<sequence length="109" mass="11934">MFELKTVALFVVTAIAEIVGCYLPYLWLRQSGSIWLLLPAALSLALFAWLLSLHPEASGRVYAAYGGIYVAVALGWLWLVDGIKPTNWDVAGVVFTFIGMGIIMFAPRA</sequence>
<evidence type="ECO:0000255" key="1">
    <source>
        <dbReference type="HAMAP-Rule" id="MF_00010"/>
    </source>
</evidence>
<protein>
    <recommendedName>
        <fullName evidence="1">UPF0060 membrane protein HEAR0108</fullName>
    </recommendedName>
</protein>
<feature type="chain" id="PRO_1000000760" description="UPF0060 membrane protein HEAR0108">
    <location>
        <begin position="1"/>
        <end position="109"/>
    </location>
</feature>
<feature type="transmembrane region" description="Helical" evidence="1">
    <location>
        <begin position="7"/>
        <end position="27"/>
    </location>
</feature>
<feature type="transmembrane region" description="Helical" evidence="1">
    <location>
        <begin position="33"/>
        <end position="53"/>
    </location>
</feature>
<feature type="transmembrane region" description="Helical" evidence="1">
    <location>
        <begin position="63"/>
        <end position="83"/>
    </location>
</feature>
<feature type="transmembrane region" description="Helical" evidence="1">
    <location>
        <begin position="87"/>
        <end position="107"/>
    </location>
</feature>
<name>Y108_HERAR</name>
<comment type="subcellular location">
    <subcellularLocation>
        <location evidence="1">Cell inner membrane</location>
        <topology evidence="1">Multi-pass membrane protein</topology>
    </subcellularLocation>
</comment>
<comment type="similarity">
    <text evidence="1">Belongs to the UPF0060 family.</text>
</comment>
<keyword id="KW-0997">Cell inner membrane</keyword>
<keyword id="KW-1003">Cell membrane</keyword>
<keyword id="KW-0472">Membrane</keyword>
<keyword id="KW-1185">Reference proteome</keyword>
<keyword id="KW-0812">Transmembrane</keyword>
<keyword id="KW-1133">Transmembrane helix</keyword>
<dbReference type="EMBL" id="CU207211">
    <property type="protein sequence ID" value="CAL60344.1"/>
    <property type="molecule type" value="Genomic_DNA"/>
</dbReference>
<dbReference type="SMR" id="A4G1F7"/>
<dbReference type="STRING" id="204773.HEAR0108"/>
<dbReference type="KEGG" id="har:HEAR0108"/>
<dbReference type="eggNOG" id="COG1742">
    <property type="taxonomic scope" value="Bacteria"/>
</dbReference>
<dbReference type="HOGENOM" id="CLU_117653_2_0_4"/>
<dbReference type="OrthoDB" id="123240at2"/>
<dbReference type="Proteomes" id="UP000006697">
    <property type="component" value="Chromosome"/>
</dbReference>
<dbReference type="GO" id="GO:0005886">
    <property type="term" value="C:plasma membrane"/>
    <property type="evidence" value="ECO:0007669"/>
    <property type="project" value="UniProtKB-SubCell"/>
</dbReference>
<dbReference type="HAMAP" id="MF_00010">
    <property type="entry name" value="UPF0060"/>
    <property type="match status" value="1"/>
</dbReference>
<dbReference type="InterPro" id="IPR003844">
    <property type="entry name" value="UPF0060"/>
</dbReference>
<dbReference type="NCBIfam" id="NF002586">
    <property type="entry name" value="PRK02237.1"/>
    <property type="match status" value="1"/>
</dbReference>
<dbReference type="PANTHER" id="PTHR36116">
    <property type="entry name" value="UPF0060 MEMBRANE PROTEIN YNFA"/>
    <property type="match status" value="1"/>
</dbReference>
<dbReference type="PANTHER" id="PTHR36116:SF1">
    <property type="entry name" value="UPF0060 MEMBRANE PROTEIN YNFA"/>
    <property type="match status" value="1"/>
</dbReference>
<dbReference type="Pfam" id="PF02694">
    <property type="entry name" value="UPF0060"/>
    <property type="match status" value="1"/>
</dbReference>
<reference key="1">
    <citation type="journal article" date="2007" name="PLoS Genet.">
        <title>A tale of two oxidation states: bacterial colonization of arsenic-rich environments.</title>
        <authorList>
            <person name="Muller D."/>
            <person name="Medigue C."/>
            <person name="Koechler S."/>
            <person name="Barbe V."/>
            <person name="Barakat M."/>
            <person name="Talla E."/>
            <person name="Bonnefoy V."/>
            <person name="Krin E."/>
            <person name="Arsene-Ploetze F."/>
            <person name="Carapito C."/>
            <person name="Chandler M."/>
            <person name="Cournoyer B."/>
            <person name="Cruveiller S."/>
            <person name="Dossat C."/>
            <person name="Duval S."/>
            <person name="Heymann M."/>
            <person name="Leize E."/>
            <person name="Lieutaud A."/>
            <person name="Lievremont D."/>
            <person name="Makita Y."/>
            <person name="Mangenot S."/>
            <person name="Nitschke W."/>
            <person name="Ortet P."/>
            <person name="Perdrial N."/>
            <person name="Schoepp B."/>
            <person name="Siguier P."/>
            <person name="Simeonova D.D."/>
            <person name="Rouy Z."/>
            <person name="Segurens B."/>
            <person name="Turlin E."/>
            <person name="Vallenet D."/>
            <person name="van Dorsselaer A."/>
            <person name="Weiss S."/>
            <person name="Weissenbach J."/>
            <person name="Lett M.-C."/>
            <person name="Danchin A."/>
            <person name="Bertin P.N."/>
        </authorList>
    </citation>
    <scope>NUCLEOTIDE SEQUENCE [LARGE SCALE GENOMIC DNA]</scope>
    <source>
        <strain>ULPAs1</strain>
    </source>
</reference>
<proteinExistence type="inferred from homology"/>
<accession>A4G1F7</accession>
<gene>
    <name type="ordered locus">HEAR0108</name>
</gene>